<proteinExistence type="inferred from homology"/>
<feature type="chain" id="PRO_0000441312" description="MFS transporter prlG">
    <location>
        <begin position="1"/>
        <end position="473"/>
    </location>
</feature>
<feature type="transmembrane region" description="Helical" evidence="1">
    <location>
        <begin position="37"/>
        <end position="57"/>
    </location>
</feature>
<feature type="transmembrane region" description="Helical" evidence="1">
    <location>
        <begin position="71"/>
        <end position="91"/>
    </location>
</feature>
<feature type="transmembrane region" description="Helical" evidence="1">
    <location>
        <begin position="101"/>
        <end position="121"/>
    </location>
</feature>
<feature type="transmembrane region" description="Helical" evidence="1">
    <location>
        <begin position="125"/>
        <end position="145"/>
    </location>
</feature>
<feature type="transmembrane region" description="Helical" evidence="1">
    <location>
        <begin position="163"/>
        <end position="183"/>
    </location>
</feature>
<feature type="transmembrane region" description="Helical" evidence="1">
    <location>
        <begin position="191"/>
        <end position="211"/>
    </location>
</feature>
<feature type="transmembrane region" description="Helical" evidence="1">
    <location>
        <begin position="266"/>
        <end position="286"/>
    </location>
</feature>
<feature type="transmembrane region" description="Helical" evidence="1">
    <location>
        <begin position="305"/>
        <end position="325"/>
    </location>
</feature>
<feature type="transmembrane region" description="Helical" evidence="1">
    <location>
        <begin position="345"/>
        <end position="365"/>
    </location>
</feature>
<feature type="transmembrane region" description="Helical" evidence="1">
    <location>
        <begin position="372"/>
        <end position="392"/>
    </location>
</feature>
<feature type="transmembrane region" description="Helical" evidence="1">
    <location>
        <begin position="409"/>
        <end position="429"/>
    </location>
</feature>
<feature type="region of interest" description="Disordered" evidence="2">
    <location>
        <begin position="1"/>
        <end position="27"/>
    </location>
</feature>
<feature type="compositionally biased region" description="Basic and acidic residues" evidence="2">
    <location>
        <begin position="1"/>
        <end position="12"/>
    </location>
</feature>
<feature type="compositionally biased region" description="Acidic residues" evidence="2">
    <location>
        <begin position="13"/>
        <end position="22"/>
    </location>
</feature>
<reference key="1">
    <citation type="journal article" date="2015" name="ACS Synth. Biol.">
        <title>Native promoter strategy for high-yielding synthesis and engineering of fungal secondary metabolites.</title>
        <authorList>
            <person name="Kakule T.B."/>
            <person name="Jadulco R.C."/>
            <person name="Koch M."/>
            <person name="Janso J.E."/>
            <person name="Barrows L.R."/>
            <person name="Schmidt E.W."/>
        </authorList>
    </citation>
    <scope>NUCLEOTIDE SEQUENCE [GENOMIC DNA]</scope>
    <scope>FUNCTION</scope>
</reference>
<organism>
    <name type="scientific">Fungal sp. (strain NRRL 50135)</name>
    <dbReference type="NCBI Taxonomy" id="1547289"/>
    <lineage>
        <taxon>Eukaryota</taxon>
        <taxon>Fungi</taxon>
    </lineage>
</organism>
<dbReference type="EMBL" id="KM107910">
    <property type="protein sequence ID" value="AIP87507.1"/>
    <property type="molecule type" value="Genomic_DNA"/>
</dbReference>
<dbReference type="SMR" id="A0A089FRP6"/>
<dbReference type="GO" id="GO:0005886">
    <property type="term" value="C:plasma membrane"/>
    <property type="evidence" value="ECO:0007669"/>
    <property type="project" value="UniProtKB-SubCell"/>
</dbReference>
<dbReference type="GO" id="GO:0022857">
    <property type="term" value="F:transmembrane transporter activity"/>
    <property type="evidence" value="ECO:0007669"/>
    <property type="project" value="InterPro"/>
</dbReference>
<dbReference type="CDD" id="cd17323">
    <property type="entry name" value="MFS_Tpo1_MDR_like"/>
    <property type="match status" value="1"/>
</dbReference>
<dbReference type="FunFam" id="1.20.1250.20:FF:000011">
    <property type="entry name" value="MFS multidrug transporter, putative"/>
    <property type="match status" value="1"/>
</dbReference>
<dbReference type="Gene3D" id="1.20.1250.20">
    <property type="entry name" value="MFS general substrate transporter like domains"/>
    <property type="match status" value="1"/>
</dbReference>
<dbReference type="InterPro" id="IPR011701">
    <property type="entry name" value="MFS"/>
</dbReference>
<dbReference type="InterPro" id="IPR020846">
    <property type="entry name" value="MFS_dom"/>
</dbReference>
<dbReference type="InterPro" id="IPR036259">
    <property type="entry name" value="MFS_trans_sf"/>
</dbReference>
<dbReference type="PANTHER" id="PTHR23502">
    <property type="entry name" value="MAJOR FACILITATOR SUPERFAMILY"/>
    <property type="match status" value="1"/>
</dbReference>
<dbReference type="PANTHER" id="PTHR23502:SF135">
    <property type="entry name" value="MAJOR FACILITATOR SUPERFAMILY (MFS) PROFILE DOMAIN-CONTAINING PROTEIN-RELATED"/>
    <property type="match status" value="1"/>
</dbReference>
<dbReference type="Pfam" id="PF07690">
    <property type="entry name" value="MFS_1"/>
    <property type="match status" value="1"/>
</dbReference>
<dbReference type="SUPFAM" id="SSF103473">
    <property type="entry name" value="MFS general substrate transporter"/>
    <property type="match status" value="1"/>
</dbReference>
<dbReference type="PROSITE" id="PS50850">
    <property type="entry name" value="MFS"/>
    <property type="match status" value="1"/>
</dbReference>
<evidence type="ECO:0000255" key="1"/>
<evidence type="ECO:0000256" key="2">
    <source>
        <dbReference type="SAM" id="MobiDB-lite"/>
    </source>
</evidence>
<evidence type="ECO:0000303" key="3">
    <source>
    </source>
</evidence>
<evidence type="ECO:0000305" key="4"/>
<evidence type="ECO:0000305" key="5">
    <source>
    </source>
</evidence>
<protein>
    <recommendedName>
        <fullName evidence="3">MFS transporter prlG</fullName>
    </recommendedName>
    <alternativeName>
        <fullName evidence="3">Pyrrolocin biosynthesis protein G</fullName>
    </alternativeName>
</protein>
<gene>
    <name evidence="3" type="primary">prlG</name>
</gene>
<comment type="function">
    <text evidence="5">Efflux pump that might be required for efficient secretion of pyrrolocin or other secondary metabolies produced by the pyrrolocin gene cluster (PubMed:25226362).</text>
</comment>
<comment type="subcellular location">
    <subcellularLocation>
        <location evidence="4">Cell membrane</location>
        <topology evidence="1">Multi-pass membrane protein</topology>
    </subcellularLocation>
</comment>
<comment type="similarity">
    <text evidence="4">Belongs to the major facilitator superfamily.</text>
</comment>
<keyword id="KW-1003">Cell membrane</keyword>
<keyword id="KW-0472">Membrane</keyword>
<keyword id="KW-0812">Transmembrane</keyword>
<keyword id="KW-1133">Transmembrane helix</keyword>
<keyword id="KW-0813">Transport</keyword>
<accession>A0A089FRP6</accession>
<name>PRLG_FUNXX</name>
<sequence length="473" mass="51360">MSSTDAEAKNEEAVDWEGPDDPENPRNWNQGAKMTHVLLVSSFTLYSNLAAVMFAPGAQDLVAEFGITSTIVASLTVSIYILGYVFGPFLLASMSEIYGRLIIYHICNAVYIAFTIGCALSTDTAMFLVFRFICGCAASAPMAIGGGTIADLHKPEERGKAMALFGLGPLLGPVIGPVVGGFVTQFLGWRWTFWLVLILAGVVSLLALVLMRETFEPVLLTRKAAELRKSTGNYRLQARTYNKDLTPAQLLARATIRPTKMLLMSPIVFLLSVYCAFMFGLTYLLFTTFPAVFEETYGFAADVSGLAYLGLGVGMIISIGLFAVLSDKLLHQPHGGTIARPELRLILMIWSSPLVPIGFFWYGWSAKYEVHWIVPILGTSVIGLGAFLILMPAQLYLVDAFGTEAAASALAANTVLRSLFGAVLPLAGPSLYDSLGLGWGNSLLAFIGLAFAPVPFFFYKYGERLRVRFPVNS</sequence>